<dbReference type="EMBL" id="AY538378">
    <property type="protein sequence ID" value="AAT40592.1"/>
    <property type="molecule type" value="Genomic_DNA"/>
</dbReference>
<dbReference type="GO" id="GO:0009507">
    <property type="term" value="C:chloroplast"/>
    <property type="evidence" value="ECO:0007669"/>
    <property type="project" value="UniProtKB-SubCell"/>
</dbReference>
<dbReference type="GO" id="GO:0003723">
    <property type="term" value="F:RNA binding"/>
    <property type="evidence" value="ECO:0007669"/>
    <property type="project" value="UniProtKB-KW"/>
</dbReference>
<dbReference type="GO" id="GO:0006397">
    <property type="term" value="P:mRNA processing"/>
    <property type="evidence" value="ECO:0007669"/>
    <property type="project" value="UniProtKB-KW"/>
</dbReference>
<dbReference type="GO" id="GO:0008380">
    <property type="term" value="P:RNA splicing"/>
    <property type="evidence" value="ECO:0007669"/>
    <property type="project" value="UniProtKB-UniRule"/>
</dbReference>
<dbReference type="GO" id="GO:0008033">
    <property type="term" value="P:tRNA processing"/>
    <property type="evidence" value="ECO:0007669"/>
    <property type="project" value="UniProtKB-KW"/>
</dbReference>
<dbReference type="HAMAP" id="MF_01390">
    <property type="entry name" value="MatK"/>
    <property type="match status" value="1"/>
</dbReference>
<dbReference type="InterPro" id="IPR024937">
    <property type="entry name" value="Domain_X"/>
</dbReference>
<dbReference type="InterPro" id="IPR002866">
    <property type="entry name" value="Maturase_MatK"/>
</dbReference>
<dbReference type="InterPro" id="IPR024942">
    <property type="entry name" value="Maturase_MatK_N"/>
</dbReference>
<dbReference type="PANTHER" id="PTHR34811">
    <property type="entry name" value="MATURASE K"/>
    <property type="match status" value="1"/>
</dbReference>
<dbReference type="PANTHER" id="PTHR34811:SF1">
    <property type="entry name" value="MATURASE K"/>
    <property type="match status" value="1"/>
</dbReference>
<dbReference type="Pfam" id="PF01348">
    <property type="entry name" value="Intron_maturas2"/>
    <property type="match status" value="1"/>
</dbReference>
<dbReference type="Pfam" id="PF01824">
    <property type="entry name" value="MatK_N"/>
    <property type="match status" value="1"/>
</dbReference>
<reference key="1">
    <citation type="journal article" date="2005" name="Taxon">
        <title>Phylogeny of the tribe Cinchoneae (Rubiaceae), its position in Cinchonoideae, and description of a new genus, Ciliosemina.</title>
        <authorList>
            <person name="Andersson L."/>
            <person name="Antonelli A."/>
        </authorList>
    </citation>
    <scope>NUCLEOTIDE SEQUENCE [GENOMIC DNA]</scope>
</reference>
<gene>
    <name evidence="1" type="primary">matK</name>
</gene>
<accession>Q5GGS4</accession>
<sequence length="505" mass="59736">MEEIQRYLQLDRSQQHDFLYPLIFQEYIYALAHHHSLNRSILLENPDYDNQLSFLIVKRLITRMYQQNHFIIFANDSNQNPFFGRNNNLYSQTISEGFSFIVEIPFYIRLIPSQAGKGILKSYNLRSIHSLFPFLENNFSHLNSVLDILIPRSVHLEILVQNLRYWVKDVSSLHLLRFLFRESWNCNPLIATKKRGFGFEPKRSQRLLFFLYNSHVCEYESIFVFLRNQSSHLRSTSFGVFLERIYFYGKIERLVEVFAKDFRASLWLFKDPFMHYVRYQGKSILVSKGTPLLMNKWKYYLVNFWQSYFDLWVHSGRVYINQLPNHSLNFIGYLSSVRLNPSMVRSQMLENSFLINNAIKKLDTLVPIVPLIGSLAKAKFCNLLGHPISKPAWAGLSDSDIIDRFGQICRNLSHYHSGSSKKKSLYRIKYILRLSCAKTLARKHKSTVRAFLKRLGSEFLEEFLTLEEEVLSLTFPRASSTFRGEYRSRIWYLDIIYINDLTNFQ</sequence>
<organism>
    <name type="scientific">Chiococca alba</name>
    <name type="common">West Indian milkberry</name>
    <name type="synonym">Lonicera alba</name>
    <dbReference type="NCBI Taxonomy" id="28527"/>
    <lineage>
        <taxon>Eukaryota</taxon>
        <taxon>Viridiplantae</taxon>
        <taxon>Streptophyta</taxon>
        <taxon>Embryophyta</taxon>
        <taxon>Tracheophyta</taxon>
        <taxon>Spermatophyta</taxon>
        <taxon>Magnoliopsida</taxon>
        <taxon>eudicotyledons</taxon>
        <taxon>Gunneridae</taxon>
        <taxon>Pentapetalae</taxon>
        <taxon>asterids</taxon>
        <taxon>lamiids</taxon>
        <taxon>Gentianales</taxon>
        <taxon>Rubiaceae</taxon>
        <taxon>Cinchonoideae</taxon>
        <taxon>Chiococceae</taxon>
        <taxon>Chiococca</taxon>
    </lineage>
</organism>
<evidence type="ECO:0000255" key="1">
    <source>
        <dbReference type="HAMAP-Rule" id="MF_01390"/>
    </source>
</evidence>
<protein>
    <recommendedName>
        <fullName evidence="1">Maturase K</fullName>
    </recommendedName>
    <alternativeName>
        <fullName evidence="1">Intron maturase</fullName>
    </alternativeName>
</protein>
<keyword id="KW-0150">Chloroplast</keyword>
<keyword id="KW-0507">mRNA processing</keyword>
<keyword id="KW-0934">Plastid</keyword>
<keyword id="KW-0694">RNA-binding</keyword>
<keyword id="KW-0819">tRNA processing</keyword>
<geneLocation type="chloroplast"/>
<name>MATK_CHIAL</name>
<comment type="function">
    <text evidence="1">Usually encoded in the trnK tRNA gene intron. Probably assists in splicing its own and other chloroplast group II introns.</text>
</comment>
<comment type="subcellular location">
    <subcellularLocation>
        <location>Plastid</location>
        <location>Chloroplast</location>
    </subcellularLocation>
</comment>
<comment type="similarity">
    <text evidence="1">Belongs to the intron maturase 2 family. MatK subfamily.</text>
</comment>
<proteinExistence type="inferred from homology"/>
<feature type="chain" id="PRO_0000143331" description="Maturase K">
    <location>
        <begin position="1"/>
        <end position="505"/>
    </location>
</feature>